<dbReference type="EC" id="6.1.1.20" evidence="7"/>
<dbReference type="EMBL" id="D84430">
    <property type="protein sequence ID" value="BAA95608.1"/>
    <property type="molecule type" value="mRNA"/>
</dbReference>
<dbReference type="EMBL" id="AF042346">
    <property type="protein sequence ID" value="AAD02220.1"/>
    <property type="molecule type" value="mRNA"/>
</dbReference>
<dbReference type="EMBL" id="AF161521">
    <property type="protein sequence ID" value="AAF29136.1"/>
    <property type="molecule type" value="mRNA"/>
</dbReference>
<dbReference type="EMBL" id="AK294158">
    <property type="protein sequence ID" value="BAG57481.1"/>
    <property type="molecule type" value="mRNA"/>
</dbReference>
<dbReference type="EMBL" id="AC097461">
    <property type="protein sequence ID" value="AAX88958.1"/>
    <property type="molecule type" value="Genomic_DNA"/>
</dbReference>
<dbReference type="EMBL" id="AC104772">
    <property type="protein sequence ID" value="AAX81986.1"/>
    <property type="molecule type" value="Genomic_DNA"/>
</dbReference>
<dbReference type="EMBL" id="CH471063">
    <property type="protein sequence ID" value="EAW70804.1"/>
    <property type="molecule type" value="Genomic_DNA"/>
</dbReference>
<dbReference type="EMBL" id="BC017783">
    <property type="protein sequence ID" value="AAH17783.1"/>
    <property type="molecule type" value="mRNA"/>
</dbReference>
<dbReference type="CCDS" id="CCDS2454.1">
    <molecule id="Q9NSD9-1"/>
</dbReference>
<dbReference type="RefSeq" id="NP_005678.3">
    <molecule id="Q9NSD9-1"/>
    <property type="nucleotide sequence ID" value="NM_005687.4"/>
</dbReference>
<dbReference type="RefSeq" id="XP_006712232.1">
    <molecule id="Q9NSD9-2"/>
    <property type="nucleotide sequence ID" value="XM_006712169.3"/>
</dbReference>
<dbReference type="RefSeq" id="XP_011508768.1">
    <molecule id="Q9NSD9-2"/>
    <property type="nucleotide sequence ID" value="XM_011510466.3"/>
</dbReference>
<dbReference type="RefSeq" id="XP_016858599.1">
    <property type="nucleotide sequence ID" value="XM_017003110.1"/>
</dbReference>
<dbReference type="PDB" id="3L4G">
    <property type="method" value="X-ray"/>
    <property type="resolution" value="3.30 A"/>
    <property type="chains" value="B/D/F/H/J/L/N/P=1-589"/>
</dbReference>
<dbReference type="PDBsum" id="3L4G"/>
<dbReference type="SMR" id="Q9NSD9"/>
<dbReference type="BioGRID" id="115367">
    <property type="interactions" value="172"/>
</dbReference>
<dbReference type="ComplexPortal" id="CPX-2208">
    <property type="entry name" value="Phenylalanyl-tRNA synthetase complex"/>
</dbReference>
<dbReference type="DIP" id="DIP-32869N"/>
<dbReference type="FunCoup" id="Q9NSD9">
    <property type="interactions" value="2497"/>
</dbReference>
<dbReference type="IntAct" id="Q9NSD9">
    <property type="interactions" value="58"/>
</dbReference>
<dbReference type="MINT" id="Q9NSD9"/>
<dbReference type="STRING" id="9606.ENSP00000281828"/>
<dbReference type="ChEMBL" id="CHEMBL4105969"/>
<dbReference type="DrugBank" id="DB00120">
    <property type="generic name" value="Phenylalanine"/>
</dbReference>
<dbReference type="GlyGen" id="Q9NSD9">
    <property type="glycosylation" value="1 site, 1 O-linked glycan (1 site)"/>
</dbReference>
<dbReference type="iPTMnet" id="Q9NSD9"/>
<dbReference type="PhosphoSitePlus" id="Q9NSD9"/>
<dbReference type="SwissPalm" id="Q9NSD9"/>
<dbReference type="BioMuta" id="FARSB"/>
<dbReference type="DMDM" id="296452943"/>
<dbReference type="jPOST" id="Q9NSD9"/>
<dbReference type="MassIVE" id="Q9NSD9"/>
<dbReference type="PaxDb" id="9606-ENSP00000281828"/>
<dbReference type="PeptideAtlas" id="Q9NSD9"/>
<dbReference type="ProteomicsDB" id="82538">
    <molecule id="Q9NSD9-1"/>
</dbReference>
<dbReference type="Pumba" id="Q9NSD9"/>
<dbReference type="ABCD" id="Q9NSD9">
    <property type="antibodies" value="1 sequenced antibody"/>
</dbReference>
<dbReference type="Antibodypedia" id="34360">
    <property type="antibodies" value="283 antibodies from 29 providers"/>
</dbReference>
<dbReference type="DNASU" id="10056"/>
<dbReference type="Ensembl" id="ENST00000281828.8">
    <molecule id="Q9NSD9-1"/>
    <property type="protein sequence ID" value="ENSP00000281828.6"/>
    <property type="gene ID" value="ENSG00000116120.11"/>
</dbReference>
<dbReference type="GeneID" id="10056"/>
<dbReference type="KEGG" id="hsa:10056"/>
<dbReference type="MANE-Select" id="ENST00000281828.8">
    <property type="protein sequence ID" value="ENSP00000281828.6"/>
    <property type="RefSeq nucleotide sequence ID" value="NM_005687.5"/>
    <property type="RefSeq protein sequence ID" value="NP_005678.3"/>
</dbReference>
<dbReference type="UCSC" id="uc002vne.2">
    <molecule id="Q9NSD9-1"/>
    <property type="organism name" value="human"/>
</dbReference>
<dbReference type="AGR" id="HGNC:17800"/>
<dbReference type="CTD" id="10056"/>
<dbReference type="DisGeNET" id="10056"/>
<dbReference type="GeneCards" id="FARSB"/>
<dbReference type="HGNC" id="HGNC:17800">
    <property type="gene designation" value="FARSB"/>
</dbReference>
<dbReference type="HPA" id="ENSG00000116120">
    <property type="expression patterns" value="Low tissue specificity"/>
</dbReference>
<dbReference type="MalaCards" id="FARSB"/>
<dbReference type="MIM" id="609690">
    <property type="type" value="gene"/>
</dbReference>
<dbReference type="MIM" id="613658">
    <property type="type" value="phenotype"/>
</dbReference>
<dbReference type="neXtProt" id="NX_Q9NSD9"/>
<dbReference type="OpenTargets" id="ENSG00000116120"/>
<dbReference type="Orphanet" id="178506">
    <property type="disease" value="Brain calcification, Rajab type"/>
</dbReference>
<dbReference type="PharmGKB" id="PA162388068"/>
<dbReference type="VEuPathDB" id="HostDB:ENSG00000116120"/>
<dbReference type="eggNOG" id="KOG2472">
    <property type="taxonomic scope" value="Eukaryota"/>
</dbReference>
<dbReference type="GeneTree" id="ENSGT00530000063489"/>
<dbReference type="HOGENOM" id="CLU_020279_2_0_1"/>
<dbReference type="InParanoid" id="Q9NSD9"/>
<dbReference type="OMA" id="FPGRCAN"/>
<dbReference type="OrthoDB" id="1698572at2759"/>
<dbReference type="PAN-GO" id="Q9NSD9">
    <property type="GO annotations" value="2 GO annotations based on evolutionary models"/>
</dbReference>
<dbReference type="PhylomeDB" id="Q9NSD9"/>
<dbReference type="TreeFam" id="TF105681"/>
<dbReference type="BRENDA" id="6.1.1.20">
    <property type="organism ID" value="2681"/>
</dbReference>
<dbReference type="PathwayCommons" id="Q9NSD9"/>
<dbReference type="Reactome" id="R-HSA-379716">
    <property type="pathway name" value="Cytosolic tRNA aminoacylation"/>
</dbReference>
<dbReference type="SignaLink" id="Q9NSD9"/>
<dbReference type="SIGNOR" id="Q9NSD9"/>
<dbReference type="BioGRID-ORCS" id="10056">
    <property type="hits" value="828 hits in 1162 CRISPR screens"/>
</dbReference>
<dbReference type="CD-CODE" id="91857CE7">
    <property type="entry name" value="Nucleolus"/>
</dbReference>
<dbReference type="CD-CODE" id="FB4E32DD">
    <property type="entry name" value="Presynaptic clusters and postsynaptic densities"/>
</dbReference>
<dbReference type="ChiTaRS" id="FARSB">
    <property type="organism name" value="human"/>
</dbReference>
<dbReference type="EvolutionaryTrace" id="Q9NSD9"/>
<dbReference type="GeneWiki" id="FARSB"/>
<dbReference type="GenomeRNAi" id="10056"/>
<dbReference type="Pharos" id="Q9NSD9">
    <property type="development level" value="Tchem"/>
</dbReference>
<dbReference type="PRO" id="PR:Q9NSD9"/>
<dbReference type="Proteomes" id="UP000005640">
    <property type="component" value="Chromosome 2"/>
</dbReference>
<dbReference type="RNAct" id="Q9NSD9">
    <property type="molecule type" value="protein"/>
</dbReference>
<dbReference type="Bgee" id="ENSG00000116120">
    <property type="expression patterns" value="Expressed in left ventricle myocardium and 197 other cell types or tissues"/>
</dbReference>
<dbReference type="GO" id="GO:0005737">
    <property type="term" value="C:cytoplasm"/>
    <property type="evidence" value="ECO:0000304"/>
    <property type="project" value="ProtInc"/>
</dbReference>
<dbReference type="GO" id="GO:0005829">
    <property type="term" value="C:cytosol"/>
    <property type="evidence" value="ECO:0000304"/>
    <property type="project" value="Reactome"/>
</dbReference>
<dbReference type="GO" id="GO:0016020">
    <property type="term" value="C:membrane"/>
    <property type="evidence" value="ECO:0007005"/>
    <property type="project" value="UniProtKB"/>
</dbReference>
<dbReference type="GO" id="GO:0009328">
    <property type="term" value="C:phenylalanine-tRNA ligase complex"/>
    <property type="evidence" value="ECO:0000314"/>
    <property type="project" value="UniProtKB"/>
</dbReference>
<dbReference type="GO" id="GO:0005524">
    <property type="term" value="F:ATP binding"/>
    <property type="evidence" value="ECO:0007669"/>
    <property type="project" value="UniProtKB-KW"/>
</dbReference>
<dbReference type="GO" id="GO:0000287">
    <property type="term" value="F:magnesium ion binding"/>
    <property type="evidence" value="ECO:0000250"/>
    <property type="project" value="UniProtKB"/>
</dbReference>
<dbReference type="GO" id="GO:0004826">
    <property type="term" value="F:phenylalanine-tRNA ligase activity"/>
    <property type="evidence" value="ECO:0000314"/>
    <property type="project" value="UniProtKB"/>
</dbReference>
<dbReference type="GO" id="GO:0003723">
    <property type="term" value="F:RNA binding"/>
    <property type="evidence" value="ECO:0007669"/>
    <property type="project" value="InterPro"/>
</dbReference>
<dbReference type="GO" id="GO:0006432">
    <property type="term" value="P:phenylalanyl-tRNA aminoacylation"/>
    <property type="evidence" value="ECO:0000314"/>
    <property type="project" value="UniProtKB"/>
</dbReference>
<dbReference type="GO" id="GO:0051290">
    <property type="term" value="P:protein heterotetramerization"/>
    <property type="evidence" value="ECO:0000314"/>
    <property type="project" value="UniProtKB"/>
</dbReference>
<dbReference type="GO" id="GO:0006412">
    <property type="term" value="P:translation"/>
    <property type="evidence" value="ECO:0000304"/>
    <property type="project" value="ProtInc"/>
</dbReference>
<dbReference type="CDD" id="cd00769">
    <property type="entry name" value="PheRS_beta_core"/>
    <property type="match status" value="1"/>
</dbReference>
<dbReference type="FunFam" id="3.30.56.10:FF:000003">
    <property type="entry name" value="Phenylalanine--tRNA ligase beta subunit"/>
    <property type="match status" value="1"/>
</dbReference>
<dbReference type="FunFam" id="3.30.56.10:FF:000007">
    <property type="entry name" value="Phenylalanine--tRNA ligase beta subunit"/>
    <property type="match status" value="1"/>
</dbReference>
<dbReference type="FunFam" id="3.30.930.10:FF:000032">
    <property type="entry name" value="Phenylalanine--tRNA ligase beta subunit"/>
    <property type="match status" value="1"/>
</dbReference>
<dbReference type="FunFam" id="3.50.40.10:FF:000002">
    <property type="entry name" value="phenylalanine--tRNA ligase beta subunit"/>
    <property type="match status" value="1"/>
</dbReference>
<dbReference type="Gene3D" id="3.30.56.10">
    <property type="match status" value="2"/>
</dbReference>
<dbReference type="Gene3D" id="3.30.930.10">
    <property type="entry name" value="Bira Bifunctional Protein, Domain 2"/>
    <property type="match status" value="1"/>
</dbReference>
<dbReference type="Gene3D" id="3.50.40.10">
    <property type="entry name" value="Phenylalanyl-trna Synthetase, Chain B, domain 3"/>
    <property type="match status" value="1"/>
</dbReference>
<dbReference type="InterPro" id="IPR045864">
    <property type="entry name" value="aa-tRNA-synth_II/BPL/LPL"/>
</dbReference>
<dbReference type="InterPro" id="IPR005146">
    <property type="entry name" value="B3/B4_tRNA-bd"/>
</dbReference>
<dbReference type="InterPro" id="IPR009061">
    <property type="entry name" value="DNA-bd_dom_put_sf"/>
</dbReference>
<dbReference type="InterPro" id="IPR045060">
    <property type="entry name" value="Phe-tRNA-ligase_IIc_bsu"/>
</dbReference>
<dbReference type="InterPro" id="IPR004531">
    <property type="entry name" value="Phe-tRNA-synth_IIc_bsu_arc_euk"/>
</dbReference>
<dbReference type="InterPro" id="IPR020825">
    <property type="entry name" value="Phe-tRNA_synthase-like_B3/B4"/>
</dbReference>
<dbReference type="InterPro" id="IPR041616">
    <property type="entry name" value="PheRS_beta_core"/>
</dbReference>
<dbReference type="InterPro" id="IPR040659">
    <property type="entry name" value="PhetRS_B1"/>
</dbReference>
<dbReference type="InterPro" id="IPR005147">
    <property type="entry name" value="tRNA_synthase_B5-dom"/>
</dbReference>
<dbReference type="NCBIfam" id="TIGR00471">
    <property type="entry name" value="pheT_arch"/>
    <property type="match status" value="1"/>
</dbReference>
<dbReference type="PANTHER" id="PTHR10947:SF0">
    <property type="entry name" value="PHENYLALANINE--TRNA LIGASE BETA SUBUNIT"/>
    <property type="match status" value="1"/>
</dbReference>
<dbReference type="PANTHER" id="PTHR10947">
    <property type="entry name" value="PHENYLALANYL-TRNA SYNTHETASE BETA CHAIN AND LEUCINE-RICH REPEAT-CONTAINING PROTEIN 47"/>
    <property type="match status" value="1"/>
</dbReference>
<dbReference type="Pfam" id="PF03483">
    <property type="entry name" value="B3_4"/>
    <property type="match status" value="1"/>
</dbReference>
<dbReference type="Pfam" id="PF03484">
    <property type="entry name" value="B5"/>
    <property type="match status" value="1"/>
</dbReference>
<dbReference type="Pfam" id="PF18262">
    <property type="entry name" value="PhetRS_B1"/>
    <property type="match status" value="1"/>
</dbReference>
<dbReference type="Pfam" id="PF17759">
    <property type="entry name" value="tRNA_synthFbeta"/>
    <property type="match status" value="1"/>
</dbReference>
<dbReference type="SMART" id="SM00873">
    <property type="entry name" value="B3_4"/>
    <property type="match status" value="1"/>
</dbReference>
<dbReference type="SMART" id="SM00874">
    <property type="entry name" value="B5"/>
    <property type="match status" value="1"/>
</dbReference>
<dbReference type="SUPFAM" id="SSF55681">
    <property type="entry name" value="Class II aaRS and biotin synthetases"/>
    <property type="match status" value="1"/>
</dbReference>
<dbReference type="SUPFAM" id="SSF56037">
    <property type="entry name" value="PheT/TilS domain"/>
    <property type="match status" value="1"/>
</dbReference>
<dbReference type="SUPFAM" id="SSF46955">
    <property type="entry name" value="Putative DNA-binding domain"/>
    <property type="match status" value="2"/>
</dbReference>
<dbReference type="PROSITE" id="PS51483">
    <property type="entry name" value="B5"/>
    <property type="match status" value="1"/>
</dbReference>
<accession>Q9NSD9</accession>
<accession>B4DFM0</accession>
<accession>O95708</accession>
<accession>Q4ZFX1</accession>
<accession>Q57ZJ5</accession>
<accession>Q9NZZ6</accession>
<feature type="chain" id="PRO_0000127016" description="Phenylalanine--tRNA ligase beta subunit">
    <location>
        <begin position="1"/>
        <end position="589"/>
    </location>
</feature>
<feature type="domain" description="B5" evidence="2">
    <location>
        <begin position="302"/>
        <end position="379"/>
    </location>
</feature>
<feature type="binding site" evidence="2">
    <location>
        <position position="357"/>
    </location>
    <ligand>
        <name>Mg(2+)</name>
        <dbReference type="ChEBI" id="CHEBI:18420"/>
        <note>shared with alpha subunit</note>
    </ligand>
</feature>
<feature type="binding site" evidence="2">
    <location>
        <position position="363"/>
    </location>
    <ligand>
        <name>Mg(2+)</name>
        <dbReference type="ChEBI" id="CHEBI:18420"/>
        <note>shared with alpha subunit</note>
    </ligand>
</feature>
<feature type="binding site" evidence="2">
    <location>
        <position position="366"/>
    </location>
    <ligand>
        <name>Mg(2+)</name>
        <dbReference type="ChEBI" id="CHEBI:18420"/>
        <note>shared with alpha subunit</note>
    </ligand>
</feature>
<feature type="binding site" evidence="2">
    <location>
        <position position="367"/>
    </location>
    <ligand>
        <name>Mg(2+)</name>
        <dbReference type="ChEBI" id="CHEBI:18420"/>
        <note>shared with alpha subunit</note>
    </ligand>
</feature>
<feature type="splice variant" id="VSP_056866" description="In isoform 2." evidence="13">
    <location>
        <begin position="1"/>
        <end position="99"/>
    </location>
</feature>
<feature type="sequence variant" id="VAR_081054" description="In RILDBC1; dbSNP:rs1419129874." evidence="9">
    <original>C</original>
    <variation>R</variation>
    <location>
        <position position="76"/>
    </location>
</feature>
<feature type="sequence variant" id="VAR_081055" description="In RILDBC1; dbSNP:rs1466642025." evidence="9">
    <original>F</original>
    <variation>S</variation>
    <location>
        <position position="252"/>
    </location>
</feature>
<feature type="sequence variant" id="VAR_081056" description="In RILDBC1; dbSNP:rs753710639." evidence="8">
    <original>T</original>
    <variation>M</variation>
    <location>
        <position position="256"/>
    </location>
</feature>
<feature type="sequence variant" id="VAR_081057" description="In RILDBC1; dbSNP:rs1553554543." evidence="9">
    <original>K</original>
    <variation>E</variation>
    <location>
        <position position="262"/>
    </location>
</feature>
<feature type="sequence variant" id="VAR_081058" description="In RILDBC1; dbSNP:rs767956337." evidence="10">
    <original>E</original>
    <variation>K</variation>
    <location>
        <position position="285"/>
    </location>
</feature>
<feature type="sequence variant" id="VAR_081059" description="In RILDBC1; has no defect in protein synthesis; dbSNP:rs773579570." evidence="9">
    <original>R</original>
    <variation>Q</variation>
    <location>
        <position position="305"/>
    </location>
</feature>
<feature type="sequence variant" id="VAR_081060" description="In RILDBC1; dbSNP:rs1553553086." evidence="9">
    <original>R</original>
    <variation>Q</variation>
    <location>
        <position position="401"/>
    </location>
</feature>
<feature type="sequence variant" id="VAR_081061" description="In RILDBC1; dbSNP:rs1396171148." evidence="9">
    <original>T</original>
    <variation>P</variation>
    <location>
        <position position="461"/>
    </location>
</feature>
<feature type="sequence variant" id="VAR_071245" description="In dbSNP:rs7185." evidence="3 4 5 6 11 12">
    <original>V</original>
    <variation>I</variation>
    <location>
        <position position="585"/>
    </location>
</feature>
<feature type="sequence conflict" description="In Ref. 3; AAF29136." evidence="14" ref="3">
    <original>Q</original>
    <variation>R</variation>
    <location>
        <position position="281"/>
    </location>
</feature>
<feature type="sequence conflict" description="In Ref. 1; BAA95608." evidence="14" ref="1">
    <original>G</original>
    <variation>V</variation>
    <location>
        <position position="555"/>
    </location>
</feature>
<feature type="strand" evidence="18">
    <location>
        <begin position="3"/>
        <end position="7"/>
    </location>
</feature>
<feature type="helix" evidence="18">
    <location>
        <begin position="8"/>
        <end position="15"/>
    </location>
</feature>
<feature type="helix" evidence="18">
    <location>
        <begin position="23"/>
        <end position="30"/>
    </location>
</feature>
<feature type="strand" evidence="18">
    <location>
        <begin position="34"/>
        <end position="40"/>
    </location>
</feature>
<feature type="helix" evidence="18">
    <location>
        <begin position="41"/>
        <end position="45"/>
    </location>
</feature>
<feature type="strand" evidence="18">
    <location>
        <begin position="48"/>
        <end position="50"/>
    </location>
</feature>
<feature type="strand" evidence="18">
    <location>
        <begin position="56"/>
        <end position="66"/>
    </location>
</feature>
<feature type="helix" evidence="18">
    <location>
        <begin position="77"/>
        <end position="87"/>
    </location>
</feature>
<feature type="strand" evidence="18">
    <location>
        <begin position="97"/>
        <end position="99"/>
    </location>
</feature>
<feature type="strand" evidence="18">
    <location>
        <begin position="107"/>
        <end position="110"/>
    </location>
</feature>
<feature type="turn" evidence="18">
    <location>
        <begin position="112"/>
        <end position="117"/>
    </location>
</feature>
<feature type="strand" evidence="18">
    <location>
        <begin position="120"/>
        <end position="126"/>
    </location>
</feature>
<feature type="helix" evidence="18">
    <location>
        <begin position="133"/>
        <end position="145"/>
    </location>
</feature>
<feature type="turn" evidence="18">
    <location>
        <begin position="146"/>
        <end position="155"/>
    </location>
</feature>
<feature type="strand" evidence="18">
    <location>
        <begin position="156"/>
        <end position="163"/>
    </location>
</feature>
<feature type="helix" evidence="18">
    <location>
        <begin position="164"/>
        <end position="166"/>
    </location>
</feature>
<feature type="strand" evidence="18">
    <location>
        <begin position="171"/>
        <end position="176"/>
    </location>
</feature>
<feature type="strand" evidence="18">
    <location>
        <begin position="178"/>
        <end position="180"/>
    </location>
</feature>
<feature type="helix" evidence="18">
    <location>
        <begin position="194"/>
        <end position="200"/>
    </location>
</feature>
<feature type="turn" evidence="18">
    <location>
        <begin position="205"/>
        <end position="214"/>
    </location>
</feature>
<feature type="strand" evidence="18">
    <location>
        <begin position="220"/>
        <end position="224"/>
    </location>
</feature>
<feature type="turn" evidence="18">
    <location>
        <begin position="234"/>
        <end position="236"/>
    </location>
</feature>
<feature type="strand" evidence="18">
    <location>
        <begin position="237"/>
        <end position="240"/>
    </location>
</feature>
<feature type="strand" evidence="18">
    <location>
        <begin position="251"/>
        <end position="258"/>
    </location>
</feature>
<feature type="helix" evidence="18">
    <location>
        <begin position="260"/>
        <end position="274"/>
    </location>
</feature>
<feature type="helix" evidence="18">
    <location>
        <begin position="275"/>
        <end position="277"/>
    </location>
</feature>
<feature type="strand" evidence="18">
    <location>
        <begin position="281"/>
        <end position="285"/>
    </location>
</feature>
<feature type="strand" evidence="18">
    <location>
        <begin position="287"/>
        <end position="290"/>
    </location>
</feature>
<feature type="strand" evidence="18">
    <location>
        <begin position="296"/>
        <end position="299"/>
    </location>
</feature>
<feature type="strand" evidence="18">
    <location>
        <begin position="305"/>
        <end position="310"/>
    </location>
</feature>
<feature type="helix" evidence="18">
    <location>
        <begin position="311"/>
        <end position="318"/>
    </location>
</feature>
<feature type="helix" evidence="18">
    <location>
        <begin position="324"/>
        <end position="333"/>
    </location>
</feature>
<feature type="strand" evidence="18">
    <location>
        <begin position="337"/>
        <end position="340"/>
    </location>
</feature>
<feature type="strand" evidence="18">
    <location>
        <begin position="342"/>
        <end position="351"/>
    </location>
</feature>
<feature type="helix" evidence="18">
    <location>
        <begin position="361"/>
        <end position="372"/>
    </location>
</feature>
<feature type="helix" evidence="18">
    <location>
        <begin position="374"/>
        <end position="376"/>
    </location>
</feature>
<feature type="helix" evidence="18">
    <location>
        <begin position="392"/>
        <end position="406"/>
    </location>
</feature>
<feature type="strand" evidence="18">
    <location>
        <begin position="416"/>
        <end position="418"/>
    </location>
</feature>
<feature type="helix" evidence="18">
    <location>
        <begin position="420"/>
        <end position="423"/>
    </location>
</feature>
<feature type="helix" evidence="18">
    <location>
        <begin position="425"/>
        <end position="427"/>
    </location>
</feature>
<feature type="strand" evidence="18">
    <location>
        <begin position="438"/>
        <end position="441"/>
    </location>
</feature>
<feature type="helix" evidence="18">
    <location>
        <begin position="445"/>
        <end position="447"/>
    </location>
</feature>
<feature type="strand" evidence="18">
    <location>
        <begin position="448"/>
        <end position="450"/>
    </location>
</feature>
<feature type="helix" evidence="18">
    <location>
        <begin position="455"/>
        <end position="464"/>
    </location>
</feature>
<feature type="turn" evidence="18">
    <location>
        <begin position="465"/>
        <end position="467"/>
    </location>
</feature>
<feature type="strand" evidence="18">
    <location>
        <begin position="472"/>
        <end position="483"/>
    </location>
</feature>
<feature type="strand" evidence="18">
    <location>
        <begin position="490"/>
        <end position="505"/>
    </location>
</feature>
<feature type="helix" evidence="18">
    <location>
        <begin position="508"/>
        <end position="521"/>
    </location>
</feature>
<feature type="turn" evidence="18">
    <location>
        <begin position="528"/>
        <end position="531"/>
    </location>
</feature>
<feature type="strand" evidence="18">
    <location>
        <begin position="532"/>
        <end position="537"/>
    </location>
</feature>
<feature type="strand" evidence="18">
    <location>
        <begin position="543"/>
        <end position="553"/>
    </location>
</feature>
<feature type="strand" evidence="18">
    <location>
        <begin position="556"/>
        <end position="564"/>
    </location>
</feature>
<feature type="helix" evidence="18">
    <location>
        <begin position="566"/>
        <end position="571"/>
    </location>
</feature>
<feature type="strand" evidence="18">
    <location>
        <begin position="578"/>
        <end position="584"/>
    </location>
</feature>
<feature type="helix" evidence="18">
    <location>
        <begin position="586"/>
        <end position="588"/>
    </location>
</feature>
<organism>
    <name type="scientific">Homo sapiens</name>
    <name type="common">Human</name>
    <dbReference type="NCBI Taxonomy" id="9606"/>
    <lineage>
        <taxon>Eukaryota</taxon>
        <taxon>Metazoa</taxon>
        <taxon>Chordata</taxon>
        <taxon>Craniata</taxon>
        <taxon>Vertebrata</taxon>
        <taxon>Euteleostomi</taxon>
        <taxon>Mammalia</taxon>
        <taxon>Eutheria</taxon>
        <taxon>Euarchontoglires</taxon>
        <taxon>Primates</taxon>
        <taxon>Haplorrhini</taxon>
        <taxon>Catarrhini</taxon>
        <taxon>Hominidae</taxon>
        <taxon>Homo</taxon>
    </lineage>
</organism>
<protein>
    <recommendedName>
        <fullName>Phenylalanine--tRNA ligase beta subunit</fullName>
        <ecNumber evidence="7">6.1.1.20</ecNumber>
    </recommendedName>
    <alternativeName>
        <fullName>Phenylalanyl-tRNA synthetase beta subunit</fullName>
        <shortName>PheRS</shortName>
    </alternativeName>
</protein>
<sequence>MPTVSVKRDLLFQALGRTYTDEEFDELCFEFGLELDEITSEKEIISKEQGNVKAAGASDVVLYKIDVPANRYDLLCLEGLVRGLQVFKERIKAPVYKRVMPDGKIQKLIITEETAKIRPFAVAAVLRNIKFTKDRYDSFIELQEKLHQNICRKRALVAIGTHDLDTLSGPFTYTAKRPSDIKFKPLNKTKEYTACELMNIYKTDNHLKHYLHIIENKPLYPVIYDSNGVVLSMPPIINGDHSRITVNTRNIFIECTGTDFTKAKIVLDIIVTMFSEYCENQFTVEAAEVVFPNGKSHTFPELAYRKEMVRADLINKKVGIRETPENLAKLLTRMYLKSEVIGDGNQIEIEIPPTRADIIHACDIVEDAAIAYGYNNIQMTLPKTYTIANQFPLNKLTELLRHDMAAAGFTEALTFALCSQEDIADKLGVDISATKAVHISNPKTAEFQVARTTLLPGLLKTIAANRKMPLPLKLFEISDIVIKDSNTDVGAKNYRHLCAVYYNKNPGFEIIHGLLDRIMQLLDVPPGEDKGGYVIKASEGPAFFPGRCAEIFARGQSVGKLGVLHPDVITKFELTMPCSSLEINVGPFL</sequence>
<evidence type="ECO:0000250" key="1">
    <source>
        <dbReference type="UniProtKB" id="A5K464"/>
    </source>
</evidence>
<evidence type="ECO:0000255" key="2">
    <source>
        <dbReference type="PROSITE-ProRule" id="PRU00816"/>
    </source>
</evidence>
<evidence type="ECO:0000269" key="3">
    <source>
    </source>
</evidence>
<evidence type="ECO:0000269" key="4">
    <source>
    </source>
</evidence>
<evidence type="ECO:0000269" key="5">
    <source>
    </source>
</evidence>
<evidence type="ECO:0000269" key="6">
    <source>
    </source>
</evidence>
<evidence type="ECO:0000269" key="7">
    <source>
    </source>
</evidence>
<evidence type="ECO:0000269" key="8">
    <source>
    </source>
</evidence>
<evidence type="ECO:0000269" key="9">
    <source>
    </source>
</evidence>
<evidence type="ECO:0000269" key="10">
    <source>
    </source>
</evidence>
<evidence type="ECO:0000269" key="11">
    <source ref="1"/>
</evidence>
<evidence type="ECO:0000269" key="12">
    <source ref="6"/>
</evidence>
<evidence type="ECO:0000303" key="13">
    <source>
    </source>
</evidence>
<evidence type="ECO:0000305" key="14"/>
<evidence type="ECO:0000305" key="15">
    <source>
    </source>
</evidence>
<evidence type="ECO:0000305" key="16">
    <source>
    </source>
</evidence>
<evidence type="ECO:0007744" key="17">
    <source>
        <dbReference type="PDB" id="3L4G"/>
    </source>
</evidence>
<evidence type="ECO:0007829" key="18">
    <source>
        <dbReference type="PDB" id="3L4G"/>
    </source>
</evidence>
<comment type="catalytic activity">
    <reaction evidence="7">
        <text>tRNA(Phe) + L-phenylalanine + ATP = L-phenylalanyl-tRNA(Phe) + AMP + diphosphate + H(+)</text>
        <dbReference type="Rhea" id="RHEA:19413"/>
        <dbReference type="Rhea" id="RHEA-COMP:9668"/>
        <dbReference type="Rhea" id="RHEA-COMP:9699"/>
        <dbReference type="ChEBI" id="CHEBI:15378"/>
        <dbReference type="ChEBI" id="CHEBI:30616"/>
        <dbReference type="ChEBI" id="CHEBI:33019"/>
        <dbReference type="ChEBI" id="CHEBI:58095"/>
        <dbReference type="ChEBI" id="CHEBI:78442"/>
        <dbReference type="ChEBI" id="CHEBI:78531"/>
        <dbReference type="ChEBI" id="CHEBI:456215"/>
        <dbReference type="EC" id="6.1.1.20"/>
    </reaction>
    <physiologicalReaction direction="left-to-right" evidence="15">
        <dbReference type="Rhea" id="RHEA:19414"/>
    </physiologicalReaction>
</comment>
<comment type="cofactor">
    <cofactor evidence="1">
        <name>Mg(2+)</name>
        <dbReference type="ChEBI" id="CHEBI:18420"/>
    </cofactor>
</comment>
<comment type="subunit">
    <text evidence="7">Heterotetramer; dimer of two heterodimers formed by FARSA and FARSB.</text>
</comment>
<comment type="interaction">
    <interactant intactId="EBI-353803">
        <id>Q9NSD9</id>
    </interactant>
    <interactant intactId="EBI-930964">
        <id>P54253</id>
        <label>ATXN1</label>
    </interactant>
    <organismsDiffer>false</organismsDiffer>
    <experiments>3</experiments>
</comment>
<comment type="interaction">
    <interactant intactId="EBI-353803">
        <id>Q9NSD9</id>
    </interactant>
    <interactant intactId="EBI-725361">
        <id>Q9Y285</id>
        <label>FARSA</label>
    </interactant>
    <organismsDiffer>false</organismsDiffer>
    <experiments>9</experiments>
</comment>
<comment type="interaction">
    <interactant intactId="EBI-353803">
        <id>Q9NSD9</id>
    </interactant>
    <interactant intactId="EBI-466029">
        <id>P42858</id>
        <label>HTT</label>
    </interactant>
    <organismsDiffer>false</organismsDiffer>
    <experiments>3</experiments>
</comment>
<comment type="subcellular location">
    <subcellularLocation>
        <location evidence="16">Cytoplasm</location>
    </subcellularLocation>
</comment>
<comment type="alternative products">
    <event type="alternative splicing"/>
    <isoform>
        <id>Q9NSD9-1</id>
        <name>1</name>
        <sequence type="displayed"/>
    </isoform>
    <isoform>
        <id>Q9NSD9-2</id>
        <name>2</name>
        <sequence type="described" ref="VSP_056866"/>
    </isoform>
</comment>
<comment type="disease" evidence="8 9 10">
    <disease id="DI-05269">
        <name>Rajab interstitial lung disease with brain calcifications 1</name>
        <acronym>RILDBC1</acronym>
        <description>An autosomal recessive, lethal neurodevelopmental disorder characterized by multiple clinical manifestations including intrauterine growth restriction, failure to thrive, developmental delay, hypotonia, interstitial lung disease, and liver dysfunction. Brain imaging shows abnormal periventricular white matter, basal ganglia echogenicity, cerebral volume loss, incomplete closure of the Sylvian fissures, and normal myelination.</description>
        <dbReference type="MIM" id="613658"/>
    </disease>
    <text>The disease is caused by variants affecting the gene represented in this entry.</text>
</comment>
<comment type="similarity">
    <text evidence="14">Belongs to the phenylalanyl-tRNA synthetase beta subunit family. Type 2 subfamily.</text>
</comment>
<gene>
    <name type="primary">FARSB</name>
    <name type="synonym">FARSLB</name>
    <name type="synonym">FRSB</name>
    <name type="ORF">HSPC173</name>
</gene>
<keyword id="KW-0002">3D-structure</keyword>
<keyword id="KW-0025">Alternative splicing</keyword>
<keyword id="KW-0030">Aminoacyl-tRNA synthetase</keyword>
<keyword id="KW-0067">ATP-binding</keyword>
<keyword id="KW-0963">Cytoplasm</keyword>
<keyword id="KW-0225">Disease variant</keyword>
<keyword id="KW-0991">Intellectual disability</keyword>
<keyword id="KW-0436">Ligase</keyword>
<keyword id="KW-0460">Magnesium</keyword>
<keyword id="KW-0479">Metal-binding</keyword>
<keyword id="KW-0523">Neurodegeneration</keyword>
<keyword id="KW-0547">Nucleotide-binding</keyword>
<keyword id="KW-0648">Protein biosynthesis</keyword>
<keyword id="KW-1267">Proteomics identification</keyword>
<keyword id="KW-1185">Reference proteome</keyword>
<proteinExistence type="evidence at protein level"/>
<reference key="1">
    <citation type="submission" date="1996-04" db="EMBL/GenBank/DDBJ databases">
        <authorList>
            <person name="Motegi H."/>
            <person name="Noda T."/>
            <person name="Shiba K."/>
        </authorList>
    </citation>
    <scope>NUCLEOTIDE SEQUENCE [MRNA] (ISOFORM 1)</scope>
    <scope>VARIANT ILE-585</scope>
</reference>
<reference key="2">
    <citation type="journal article" date="1999" name="Biochem. Biophys. Res. Commun.">
        <title>Human phenylalanyl-tRNA synthetase: cloning, characterization of the deduced amino acid sequences in terms of the structural domains and coordinately regulated expression of the alpha and beta subunits in chronic myeloid leukemia cells.</title>
        <authorList>
            <person name="Rodova M."/>
            <person name="Ankilova V."/>
            <person name="Safro M.G."/>
        </authorList>
    </citation>
    <scope>NUCLEOTIDE SEQUENCE [MRNA] (ISOFORM 1)</scope>
    <scope>VARIANT ILE-585</scope>
</reference>
<reference key="3">
    <citation type="journal article" date="2000" name="Genome Res.">
        <title>Cloning and functional analysis of cDNAs with open reading frames for 300 previously undefined genes expressed in CD34+ hematopoietic stem/progenitor cells.</title>
        <authorList>
            <person name="Zhang Q.-H."/>
            <person name="Ye M."/>
            <person name="Wu X.-Y."/>
            <person name="Ren S.-X."/>
            <person name="Zhao M."/>
            <person name="Zhao C.-J."/>
            <person name="Fu G."/>
            <person name="Shen Y."/>
            <person name="Fan H.-Y."/>
            <person name="Lu G."/>
            <person name="Zhong M."/>
            <person name="Xu X.-R."/>
            <person name="Han Z.-G."/>
            <person name="Zhang J.-W."/>
            <person name="Tao J."/>
            <person name="Huang Q.-H."/>
            <person name="Zhou J."/>
            <person name="Hu G.-X."/>
            <person name="Gu J."/>
            <person name="Chen S.-J."/>
            <person name="Chen Z."/>
        </authorList>
    </citation>
    <scope>NUCLEOTIDE SEQUENCE [LARGE SCALE MRNA] (ISOFORM 1)</scope>
    <scope>VARIANT ILE-585</scope>
    <source>
        <tissue>Umbilical cord blood</tissue>
    </source>
</reference>
<reference key="4">
    <citation type="journal article" date="2004" name="Nat. Genet.">
        <title>Complete sequencing and characterization of 21,243 full-length human cDNAs.</title>
        <authorList>
            <person name="Ota T."/>
            <person name="Suzuki Y."/>
            <person name="Nishikawa T."/>
            <person name="Otsuki T."/>
            <person name="Sugiyama T."/>
            <person name="Irie R."/>
            <person name="Wakamatsu A."/>
            <person name="Hayashi K."/>
            <person name="Sato H."/>
            <person name="Nagai K."/>
            <person name="Kimura K."/>
            <person name="Makita H."/>
            <person name="Sekine M."/>
            <person name="Obayashi M."/>
            <person name="Nishi T."/>
            <person name="Shibahara T."/>
            <person name="Tanaka T."/>
            <person name="Ishii S."/>
            <person name="Yamamoto J."/>
            <person name="Saito K."/>
            <person name="Kawai Y."/>
            <person name="Isono Y."/>
            <person name="Nakamura Y."/>
            <person name="Nagahari K."/>
            <person name="Murakami K."/>
            <person name="Yasuda T."/>
            <person name="Iwayanagi T."/>
            <person name="Wagatsuma M."/>
            <person name="Shiratori A."/>
            <person name="Sudo H."/>
            <person name="Hosoiri T."/>
            <person name="Kaku Y."/>
            <person name="Kodaira H."/>
            <person name="Kondo H."/>
            <person name="Sugawara M."/>
            <person name="Takahashi M."/>
            <person name="Kanda K."/>
            <person name="Yokoi T."/>
            <person name="Furuya T."/>
            <person name="Kikkawa E."/>
            <person name="Omura Y."/>
            <person name="Abe K."/>
            <person name="Kamihara K."/>
            <person name="Katsuta N."/>
            <person name="Sato K."/>
            <person name="Tanikawa M."/>
            <person name="Yamazaki M."/>
            <person name="Ninomiya K."/>
            <person name="Ishibashi T."/>
            <person name="Yamashita H."/>
            <person name="Murakawa K."/>
            <person name="Fujimori K."/>
            <person name="Tanai H."/>
            <person name="Kimata M."/>
            <person name="Watanabe M."/>
            <person name="Hiraoka S."/>
            <person name="Chiba Y."/>
            <person name="Ishida S."/>
            <person name="Ono Y."/>
            <person name="Takiguchi S."/>
            <person name="Watanabe S."/>
            <person name="Yosida M."/>
            <person name="Hotuta T."/>
            <person name="Kusano J."/>
            <person name="Kanehori K."/>
            <person name="Takahashi-Fujii A."/>
            <person name="Hara H."/>
            <person name="Tanase T.-O."/>
            <person name="Nomura Y."/>
            <person name="Togiya S."/>
            <person name="Komai F."/>
            <person name="Hara R."/>
            <person name="Takeuchi K."/>
            <person name="Arita M."/>
            <person name="Imose N."/>
            <person name="Musashino K."/>
            <person name="Yuuki H."/>
            <person name="Oshima A."/>
            <person name="Sasaki N."/>
            <person name="Aotsuka S."/>
            <person name="Yoshikawa Y."/>
            <person name="Matsunawa H."/>
            <person name="Ichihara T."/>
            <person name="Shiohata N."/>
            <person name="Sano S."/>
            <person name="Moriya S."/>
            <person name="Momiyama H."/>
            <person name="Satoh N."/>
            <person name="Takami S."/>
            <person name="Terashima Y."/>
            <person name="Suzuki O."/>
            <person name="Nakagawa S."/>
            <person name="Senoh A."/>
            <person name="Mizoguchi H."/>
            <person name="Goto Y."/>
            <person name="Shimizu F."/>
            <person name="Wakebe H."/>
            <person name="Hishigaki H."/>
            <person name="Watanabe T."/>
            <person name="Sugiyama A."/>
            <person name="Takemoto M."/>
            <person name="Kawakami B."/>
            <person name="Yamazaki M."/>
            <person name="Watanabe K."/>
            <person name="Kumagai A."/>
            <person name="Itakura S."/>
            <person name="Fukuzumi Y."/>
            <person name="Fujimori Y."/>
            <person name="Komiyama M."/>
            <person name="Tashiro H."/>
            <person name="Tanigami A."/>
            <person name="Fujiwara T."/>
            <person name="Ono T."/>
            <person name="Yamada K."/>
            <person name="Fujii Y."/>
            <person name="Ozaki K."/>
            <person name="Hirao M."/>
            <person name="Ohmori Y."/>
            <person name="Kawabata A."/>
            <person name="Hikiji T."/>
            <person name="Kobatake N."/>
            <person name="Inagaki H."/>
            <person name="Ikema Y."/>
            <person name="Okamoto S."/>
            <person name="Okitani R."/>
            <person name="Kawakami T."/>
            <person name="Noguchi S."/>
            <person name="Itoh T."/>
            <person name="Shigeta K."/>
            <person name="Senba T."/>
            <person name="Matsumura K."/>
            <person name="Nakajima Y."/>
            <person name="Mizuno T."/>
            <person name="Morinaga M."/>
            <person name="Sasaki M."/>
            <person name="Togashi T."/>
            <person name="Oyama M."/>
            <person name="Hata H."/>
            <person name="Watanabe M."/>
            <person name="Komatsu T."/>
            <person name="Mizushima-Sugano J."/>
            <person name="Satoh T."/>
            <person name="Shirai Y."/>
            <person name="Takahashi Y."/>
            <person name="Nakagawa K."/>
            <person name="Okumura K."/>
            <person name="Nagase T."/>
            <person name="Nomura N."/>
            <person name="Kikuchi H."/>
            <person name="Masuho Y."/>
            <person name="Yamashita R."/>
            <person name="Nakai K."/>
            <person name="Yada T."/>
            <person name="Nakamura Y."/>
            <person name="Ohara O."/>
            <person name="Isogai T."/>
            <person name="Sugano S."/>
        </authorList>
    </citation>
    <scope>NUCLEOTIDE SEQUENCE [LARGE SCALE MRNA] (ISOFORM 2)</scope>
    <scope>VARIANT ILE-585</scope>
    <source>
        <tissue>Brain cortex</tissue>
    </source>
</reference>
<reference key="5">
    <citation type="journal article" date="2005" name="Nature">
        <title>Generation and annotation of the DNA sequences of human chromosomes 2 and 4.</title>
        <authorList>
            <person name="Hillier L.W."/>
            <person name="Graves T.A."/>
            <person name="Fulton R.S."/>
            <person name="Fulton L.A."/>
            <person name="Pepin K.H."/>
            <person name="Minx P."/>
            <person name="Wagner-McPherson C."/>
            <person name="Layman D."/>
            <person name="Wylie K."/>
            <person name="Sekhon M."/>
            <person name="Becker M.C."/>
            <person name="Fewell G.A."/>
            <person name="Delehaunty K.D."/>
            <person name="Miner T.L."/>
            <person name="Nash W.E."/>
            <person name="Kremitzki C."/>
            <person name="Oddy L."/>
            <person name="Du H."/>
            <person name="Sun H."/>
            <person name="Bradshaw-Cordum H."/>
            <person name="Ali J."/>
            <person name="Carter J."/>
            <person name="Cordes M."/>
            <person name="Harris A."/>
            <person name="Isak A."/>
            <person name="van Brunt A."/>
            <person name="Nguyen C."/>
            <person name="Du F."/>
            <person name="Courtney L."/>
            <person name="Kalicki J."/>
            <person name="Ozersky P."/>
            <person name="Abbott S."/>
            <person name="Armstrong J."/>
            <person name="Belter E.A."/>
            <person name="Caruso L."/>
            <person name="Cedroni M."/>
            <person name="Cotton M."/>
            <person name="Davidson T."/>
            <person name="Desai A."/>
            <person name="Elliott G."/>
            <person name="Erb T."/>
            <person name="Fronick C."/>
            <person name="Gaige T."/>
            <person name="Haakenson W."/>
            <person name="Haglund K."/>
            <person name="Holmes A."/>
            <person name="Harkins R."/>
            <person name="Kim K."/>
            <person name="Kruchowski S.S."/>
            <person name="Strong C.M."/>
            <person name="Grewal N."/>
            <person name="Goyea E."/>
            <person name="Hou S."/>
            <person name="Levy A."/>
            <person name="Martinka S."/>
            <person name="Mead K."/>
            <person name="McLellan M.D."/>
            <person name="Meyer R."/>
            <person name="Randall-Maher J."/>
            <person name="Tomlinson C."/>
            <person name="Dauphin-Kohlberg S."/>
            <person name="Kozlowicz-Reilly A."/>
            <person name="Shah N."/>
            <person name="Swearengen-Shahid S."/>
            <person name="Snider J."/>
            <person name="Strong J.T."/>
            <person name="Thompson J."/>
            <person name="Yoakum M."/>
            <person name="Leonard S."/>
            <person name="Pearman C."/>
            <person name="Trani L."/>
            <person name="Radionenko M."/>
            <person name="Waligorski J.E."/>
            <person name="Wang C."/>
            <person name="Rock S.M."/>
            <person name="Tin-Wollam A.-M."/>
            <person name="Maupin R."/>
            <person name="Latreille P."/>
            <person name="Wendl M.C."/>
            <person name="Yang S.-P."/>
            <person name="Pohl C."/>
            <person name="Wallis J.W."/>
            <person name="Spieth J."/>
            <person name="Bieri T.A."/>
            <person name="Berkowicz N."/>
            <person name="Nelson J.O."/>
            <person name="Osborne J."/>
            <person name="Ding L."/>
            <person name="Meyer R."/>
            <person name="Sabo A."/>
            <person name="Shotland Y."/>
            <person name="Sinha P."/>
            <person name="Wohldmann P.E."/>
            <person name="Cook L.L."/>
            <person name="Hickenbotham M.T."/>
            <person name="Eldred J."/>
            <person name="Williams D."/>
            <person name="Jones T.A."/>
            <person name="She X."/>
            <person name="Ciccarelli F.D."/>
            <person name="Izaurralde E."/>
            <person name="Taylor J."/>
            <person name="Schmutz J."/>
            <person name="Myers R.M."/>
            <person name="Cox D.R."/>
            <person name="Huang X."/>
            <person name="McPherson J.D."/>
            <person name="Mardis E.R."/>
            <person name="Clifton S.W."/>
            <person name="Warren W.C."/>
            <person name="Chinwalla A.T."/>
            <person name="Eddy S.R."/>
            <person name="Marra M.A."/>
            <person name="Ovcharenko I."/>
            <person name="Furey T.S."/>
            <person name="Miller W."/>
            <person name="Eichler E.E."/>
            <person name="Bork P."/>
            <person name="Suyama M."/>
            <person name="Torrents D."/>
            <person name="Waterston R.H."/>
            <person name="Wilson R.K."/>
        </authorList>
    </citation>
    <scope>NUCLEOTIDE SEQUENCE [LARGE SCALE GENOMIC DNA]</scope>
</reference>
<reference key="6">
    <citation type="submission" date="2005-07" db="EMBL/GenBank/DDBJ databases">
        <authorList>
            <person name="Mural R.J."/>
            <person name="Istrail S."/>
            <person name="Sutton G.G."/>
            <person name="Florea L."/>
            <person name="Halpern A.L."/>
            <person name="Mobarry C.M."/>
            <person name="Lippert R."/>
            <person name="Walenz B."/>
            <person name="Shatkay H."/>
            <person name="Dew I."/>
            <person name="Miller J.R."/>
            <person name="Flanigan M.J."/>
            <person name="Edwards N.J."/>
            <person name="Bolanos R."/>
            <person name="Fasulo D."/>
            <person name="Halldorsson B.V."/>
            <person name="Hannenhalli S."/>
            <person name="Turner R."/>
            <person name="Yooseph S."/>
            <person name="Lu F."/>
            <person name="Nusskern D.R."/>
            <person name="Shue B.C."/>
            <person name="Zheng X.H."/>
            <person name="Zhong F."/>
            <person name="Delcher A.L."/>
            <person name="Huson D.H."/>
            <person name="Kravitz S.A."/>
            <person name="Mouchard L."/>
            <person name="Reinert K."/>
            <person name="Remington K.A."/>
            <person name="Clark A.G."/>
            <person name="Waterman M.S."/>
            <person name="Eichler E.E."/>
            <person name="Adams M.D."/>
            <person name="Hunkapiller M.W."/>
            <person name="Myers E.W."/>
            <person name="Venter J.C."/>
        </authorList>
    </citation>
    <scope>NUCLEOTIDE SEQUENCE [LARGE SCALE GENOMIC DNA]</scope>
    <scope>VARIANT ILE-585</scope>
</reference>
<reference key="7">
    <citation type="journal article" date="2004" name="Genome Res.">
        <title>The status, quality, and expansion of the NIH full-length cDNA project: the Mammalian Gene Collection (MGC).</title>
        <authorList>
            <consortium name="The MGC Project Team"/>
        </authorList>
    </citation>
    <scope>NUCLEOTIDE SEQUENCE [LARGE SCALE MRNA] (ISOFORM 1)</scope>
    <scope>VARIANT ILE-585</scope>
    <source>
        <tissue>Testis</tissue>
    </source>
</reference>
<reference key="8">
    <citation type="journal article" date="2011" name="BMC Syst. Biol.">
        <title>Initial characterization of the human central proteome.</title>
        <authorList>
            <person name="Burkard T.R."/>
            <person name="Planyavsky M."/>
            <person name="Kaupe I."/>
            <person name="Breitwieser F.P."/>
            <person name="Buerckstuemmer T."/>
            <person name="Bennett K.L."/>
            <person name="Superti-Furga G."/>
            <person name="Colinge J."/>
        </authorList>
    </citation>
    <scope>IDENTIFICATION BY MASS SPECTROMETRY [LARGE SCALE ANALYSIS]</scope>
</reference>
<reference key="9">
    <citation type="journal article" date="2012" name="Proc. Natl. Acad. Sci. U.S.A.">
        <title>N-terminal acetylome analyses and functional insights of the N-terminal acetyltransferase NatB.</title>
        <authorList>
            <person name="Van Damme P."/>
            <person name="Lasa M."/>
            <person name="Polevoda B."/>
            <person name="Gazquez C."/>
            <person name="Elosegui-Artola A."/>
            <person name="Kim D.S."/>
            <person name="De Juan-Pardo E."/>
            <person name="Demeyer K."/>
            <person name="Hole K."/>
            <person name="Larrea E."/>
            <person name="Timmerman E."/>
            <person name="Prieto J."/>
            <person name="Arnesen T."/>
            <person name="Sherman F."/>
            <person name="Gevaert K."/>
            <person name="Aldabe R."/>
        </authorList>
    </citation>
    <scope>IDENTIFICATION BY MASS SPECTROMETRY [LARGE SCALE ANALYSIS]</scope>
</reference>
<reference key="10">
    <citation type="journal article" date="2015" name="Proteomics">
        <title>N-terminome analysis of the human mitochondrial proteome.</title>
        <authorList>
            <person name="Vaca Jacome A.S."/>
            <person name="Rabilloud T."/>
            <person name="Schaeffer-Reiss C."/>
            <person name="Rompais M."/>
            <person name="Ayoub D."/>
            <person name="Lane L."/>
            <person name="Bairoch A."/>
            <person name="Van Dorsselaer A."/>
            <person name="Carapito C."/>
        </authorList>
    </citation>
    <scope>IDENTIFICATION BY MASS SPECTROMETRY [LARGE SCALE ANALYSIS]</scope>
</reference>
<reference evidence="17" key="11">
    <citation type="journal article" date="2010" name="Structure">
        <title>Structure of human cytosolic phenylalanyl-tRNA synthetase: evidence for kingdom-specific design of the active sites and tRNA binding patterns.</title>
        <authorList>
            <person name="Finarov I."/>
            <person name="Moor N."/>
            <person name="Kessler N."/>
            <person name="Klipcan L."/>
            <person name="Safro M.G."/>
        </authorList>
    </citation>
    <scope>X-RAY CRYSTALLOGRAPHY (3.30 ANGSTROMS)</scope>
    <scope>FUNCTION</scope>
    <scope>CATALYTIC ACTIVITY</scope>
    <scope>SUBUNIT</scope>
</reference>
<reference key="12">
    <citation type="journal article" date="2018" name="Am. J. Hum. Genet.">
        <title>Bi-allelic mutations in Phe-tRNA synthetase associated with a multi-system pulmonary disease support non-translational function.</title>
        <authorList>
            <person name="Xu Z."/>
            <person name="Lo W.S."/>
            <person name="Beck D.B."/>
            <person name="Schuch L.A."/>
            <person name="Olahova M."/>
            <person name="Kopajtich R."/>
            <person name="Chong Y.E."/>
            <person name="Alston C.L."/>
            <person name="Seidl E."/>
            <person name="Zhai L."/>
            <person name="Lau C.F."/>
            <person name="Timchak D."/>
            <person name="LeDuc C.A."/>
            <person name="Borczuk A.C."/>
            <person name="Teich A.F."/>
            <person name="Juusola J."/>
            <person name="Sofeso C."/>
            <person name="Mueller C."/>
            <person name="Pierre G."/>
            <person name="Hilliard T."/>
            <person name="Turnpenny P.D."/>
            <person name="Wagner M."/>
            <person name="Kappler M."/>
            <person name="Brasch F."/>
            <person name="Bouffard J.P."/>
            <person name="Nangle L.A."/>
            <person name="Yang X.L."/>
            <person name="Zhang M."/>
            <person name="Taylor R.W."/>
            <person name="Prokisch H."/>
            <person name="Griese M."/>
            <person name="Chung W.K."/>
            <person name="Schimmel P."/>
        </authorList>
    </citation>
    <scope>INVOLVEMENT IN RILDBC1</scope>
    <scope>VARIANTS RILDBC1 ARG-76; SER-252; GLU-262; GLN-305; GLN-401 AND PRO-461</scope>
</reference>
<reference key="13">
    <citation type="journal article" date="2018" name="Hum. Mutat.">
        <title>Compound heterozygosity for loss-of-function FARSB variants in a patient with classic features of recessive aminoacyl-tRNA synthetase-related disease.</title>
        <authorList>
            <person name="Antonellis A."/>
            <person name="Oprescu S.N."/>
            <person name="Griffin L.B."/>
            <person name="Heider A."/>
            <person name="Amalfitano A."/>
            <person name="Innis J.W."/>
        </authorList>
    </citation>
    <scope>INVOLVEMENT IN RILDBC1</scope>
    <scope>VARIANT RILDBC1 MET-256</scope>
</reference>
<reference key="14">
    <citation type="journal article" date="2018" name="Hum. Mutat.">
        <title>Homozygosity for FARSB mutation leads to Phe-tRNA synthetase-related disease of growth restriction, brain calcification, and interstitial lung disease.</title>
        <authorList>
            <person name="Zadjali F."/>
            <person name="Al-Yahyaee A."/>
            <person name="Al-Nabhani M."/>
            <person name="Al-Mubaihsi S."/>
            <person name="Gujjar A."/>
            <person name="Raniga S."/>
            <person name="Al-Maawali A."/>
        </authorList>
    </citation>
    <scope>VARIANT RILDBC1 LYS-285</scope>
</reference>
<name>SYFB_HUMAN</name>